<dbReference type="EMBL" id="AE017220">
    <property type="protein sequence ID" value="AAX67390.1"/>
    <property type="molecule type" value="Genomic_DNA"/>
</dbReference>
<dbReference type="RefSeq" id="WP_000572196.1">
    <property type="nucleotide sequence ID" value="NC_006905.1"/>
</dbReference>
<dbReference type="SMR" id="Q57IS2"/>
<dbReference type="KEGG" id="sec:SCH_3484"/>
<dbReference type="HOGENOM" id="CLU_016047_1_1_6"/>
<dbReference type="Proteomes" id="UP000000538">
    <property type="component" value="Chromosome"/>
</dbReference>
<dbReference type="GO" id="GO:0005886">
    <property type="term" value="C:plasma membrane"/>
    <property type="evidence" value="ECO:0007669"/>
    <property type="project" value="UniProtKB-SubCell"/>
</dbReference>
<dbReference type="GO" id="GO:0055085">
    <property type="term" value="P:transmembrane transport"/>
    <property type="evidence" value="ECO:0007669"/>
    <property type="project" value="InterPro"/>
</dbReference>
<dbReference type="CDD" id="cd06261">
    <property type="entry name" value="TM_PBP2"/>
    <property type="match status" value="1"/>
</dbReference>
<dbReference type="FunFam" id="1.10.3720.10:FF:000042">
    <property type="entry name" value="sn-glycerol-3-phosphate transport system permease protein UgpE"/>
    <property type="match status" value="1"/>
</dbReference>
<dbReference type="Gene3D" id="1.10.3720.10">
    <property type="entry name" value="MetI-like"/>
    <property type="match status" value="1"/>
</dbReference>
<dbReference type="InterPro" id="IPR000515">
    <property type="entry name" value="MetI-like"/>
</dbReference>
<dbReference type="InterPro" id="IPR035906">
    <property type="entry name" value="MetI-like_sf"/>
</dbReference>
<dbReference type="NCBIfam" id="NF008210">
    <property type="entry name" value="PRK10973.1"/>
    <property type="match status" value="1"/>
</dbReference>
<dbReference type="PANTHER" id="PTHR43744">
    <property type="entry name" value="ABC TRANSPORTER PERMEASE PROTEIN MG189-RELATED-RELATED"/>
    <property type="match status" value="1"/>
</dbReference>
<dbReference type="PANTHER" id="PTHR43744:SF8">
    <property type="entry name" value="SN-GLYCEROL-3-PHOSPHATE TRANSPORT SYSTEM PERMEASE PROTEIN UGPE"/>
    <property type="match status" value="1"/>
</dbReference>
<dbReference type="Pfam" id="PF00528">
    <property type="entry name" value="BPD_transp_1"/>
    <property type="match status" value="1"/>
</dbReference>
<dbReference type="SUPFAM" id="SSF161098">
    <property type="entry name" value="MetI-like"/>
    <property type="match status" value="1"/>
</dbReference>
<dbReference type="PROSITE" id="PS50928">
    <property type="entry name" value="ABC_TM1"/>
    <property type="match status" value="1"/>
</dbReference>
<proteinExistence type="inferred from homology"/>
<gene>
    <name type="primary">ugpE</name>
    <name type="ordered locus">SCH_3484</name>
</gene>
<accession>Q57IS2</accession>
<comment type="function">
    <text evidence="1">Part of the ABC transporter complex UgpBAEC involved in sn-glycerol-3-phosphate (G3P) import. Probably responsible for the translocation of the substrate across the membrane.</text>
</comment>
<comment type="subunit">
    <text evidence="1">The complex is composed of two ATP-binding proteins (UgpC), two transmembrane proteins (UgpA and UgpE) and a solute-binding protein (UgpB).</text>
</comment>
<comment type="subcellular location">
    <subcellularLocation>
        <location evidence="1">Cell inner membrane</location>
        <topology evidence="2">Multi-pass membrane protein</topology>
    </subcellularLocation>
</comment>
<comment type="similarity">
    <text evidence="4">Belongs to the binding-protein-dependent transport system permease family. UgpAE subfamily.</text>
</comment>
<keyword id="KW-0997">Cell inner membrane</keyword>
<keyword id="KW-1003">Cell membrane</keyword>
<keyword id="KW-0472">Membrane</keyword>
<keyword id="KW-0812">Transmembrane</keyword>
<keyword id="KW-1133">Transmembrane helix</keyword>
<keyword id="KW-0813">Transport</keyword>
<name>UGPE_SALCH</name>
<protein>
    <recommendedName>
        <fullName evidence="1">sn-glycerol-3-phosphate transport system permease protein UgpE</fullName>
    </recommendedName>
</protein>
<reference key="1">
    <citation type="journal article" date="2005" name="Nucleic Acids Res.">
        <title>The genome sequence of Salmonella enterica serovar Choleraesuis, a highly invasive and resistant zoonotic pathogen.</title>
        <authorList>
            <person name="Chiu C.-H."/>
            <person name="Tang P."/>
            <person name="Chu C."/>
            <person name="Hu S."/>
            <person name="Bao Q."/>
            <person name="Yu J."/>
            <person name="Chou Y.-Y."/>
            <person name="Wang H.-S."/>
            <person name="Lee Y.-S."/>
        </authorList>
    </citation>
    <scope>NUCLEOTIDE SEQUENCE [LARGE SCALE GENOMIC DNA]</scope>
    <source>
        <strain>SC-B67</strain>
    </source>
</reference>
<sequence length="281" mass="31431">MIENRRGLTIFSHTMLILGIAVILFPLYVAFVAATLDDRAVFETPMTLLPGTQLLENIKTIWVNGVGVNSAPFWLMMLNSFIMAFSITVGKITVSMLSAFAIVWFRFPLRNLFFWMIFITLMLPVEVRIFPTVEVIANLKMLDSYAGLTLPLMASATATFLFRQFFMTLPDELVEAARIDGASPMRFFRDIVLPLSKTNLAALFVITFIYGWNQYLWPLLIITDVNLGTAVAGIKGMIATGEGTTQWNQVMAAMLLTLIPPVVIVLAMQRAFVRGLVDSEK</sequence>
<feature type="chain" id="PRO_0000292681" description="sn-glycerol-3-phosphate transport system permease protein UgpE">
    <location>
        <begin position="1"/>
        <end position="281"/>
    </location>
</feature>
<feature type="transmembrane region" description="Helical" evidence="3">
    <location>
        <begin position="16"/>
        <end position="36"/>
    </location>
</feature>
<feature type="transmembrane region" description="Helical" evidence="3">
    <location>
        <begin position="85"/>
        <end position="105"/>
    </location>
</feature>
<feature type="transmembrane region" description="Helical" evidence="3">
    <location>
        <begin position="113"/>
        <end position="133"/>
    </location>
</feature>
<feature type="transmembrane region" description="Helical" evidence="3">
    <location>
        <begin position="142"/>
        <end position="162"/>
    </location>
</feature>
<feature type="transmembrane region" description="Helical" evidence="3">
    <location>
        <begin position="202"/>
        <end position="222"/>
    </location>
</feature>
<feature type="transmembrane region" description="Helical" evidence="3">
    <location>
        <begin position="247"/>
        <end position="267"/>
    </location>
</feature>
<feature type="domain" description="ABC transmembrane type-1" evidence="3">
    <location>
        <begin position="77"/>
        <end position="268"/>
    </location>
</feature>
<evidence type="ECO:0000250" key="1">
    <source>
        <dbReference type="UniProtKB" id="P10906"/>
    </source>
</evidence>
<evidence type="ECO:0000255" key="2"/>
<evidence type="ECO:0000255" key="3">
    <source>
        <dbReference type="PROSITE-ProRule" id="PRU00441"/>
    </source>
</evidence>
<evidence type="ECO:0000305" key="4"/>
<organism>
    <name type="scientific">Salmonella choleraesuis (strain SC-B67)</name>
    <dbReference type="NCBI Taxonomy" id="321314"/>
    <lineage>
        <taxon>Bacteria</taxon>
        <taxon>Pseudomonadati</taxon>
        <taxon>Pseudomonadota</taxon>
        <taxon>Gammaproteobacteria</taxon>
        <taxon>Enterobacterales</taxon>
        <taxon>Enterobacteriaceae</taxon>
        <taxon>Salmonella</taxon>
    </lineage>
</organism>